<organism>
    <name type="scientific">Rhodopseudomonas palustris (strain ATCC BAA-98 / CGA009)</name>
    <dbReference type="NCBI Taxonomy" id="258594"/>
    <lineage>
        <taxon>Bacteria</taxon>
        <taxon>Pseudomonadati</taxon>
        <taxon>Pseudomonadota</taxon>
        <taxon>Alphaproteobacteria</taxon>
        <taxon>Hyphomicrobiales</taxon>
        <taxon>Nitrobacteraceae</taxon>
        <taxon>Rhodopseudomonas</taxon>
    </lineage>
</organism>
<sequence length="206" mass="22568">MRLFVGLGNPGAKYQGNRHNIGFMVIDEIARRHGFSPWRRRFQGETADGVLDGERITLLKPLTYMNESGRAVQDAASFYKIGQNEIAVFHDEIELPPAKVRVKVGGGIAGHNGLRSISAHIGNDYLRVRLGVGHPGAKELVHNHVLGDFAKSERPWVEALCEIAADNAGLIAKGKDASFANKVHLAMQAKGFYDNDKQAKGGERDK</sequence>
<accession>Q6N1P9</accession>
<dbReference type="EC" id="3.1.1.29" evidence="1"/>
<dbReference type="EMBL" id="BX572607">
    <property type="protein sequence ID" value="CAE29796.1"/>
    <property type="molecule type" value="Genomic_DNA"/>
</dbReference>
<dbReference type="RefSeq" id="WP_011159889.1">
    <property type="nucleotide sequence ID" value="NZ_CP116810.1"/>
</dbReference>
<dbReference type="SMR" id="Q6N1P9"/>
<dbReference type="STRING" id="258594.RPA4355"/>
<dbReference type="GeneID" id="66895488"/>
<dbReference type="eggNOG" id="COG0193">
    <property type="taxonomic scope" value="Bacteria"/>
</dbReference>
<dbReference type="HOGENOM" id="CLU_062456_1_0_5"/>
<dbReference type="PhylomeDB" id="Q6N1P9"/>
<dbReference type="GO" id="GO:0005737">
    <property type="term" value="C:cytoplasm"/>
    <property type="evidence" value="ECO:0007669"/>
    <property type="project" value="UniProtKB-SubCell"/>
</dbReference>
<dbReference type="GO" id="GO:0004045">
    <property type="term" value="F:peptidyl-tRNA hydrolase activity"/>
    <property type="evidence" value="ECO:0007669"/>
    <property type="project" value="UniProtKB-UniRule"/>
</dbReference>
<dbReference type="GO" id="GO:0000049">
    <property type="term" value="F:tRNA binding"/>
    <property type="evidence" value="ECO:0007669"/>
    <property type="project" value="UniProtKB-UniRule"/>
</dbReference>
<dbReference type="GO" id="GO:0006515">
    <property type="term" value="P:protein quality control for misfolded or incompletely synthesized proteins"/>
    <property type="evidence" value="ECO:0007669"/>
    <property type="project" value="UniProtKB-UniRule"/>
</dbReference>
<dbReference type="GO" id="GO:0072344">
    <property type="term" value="P:rescue of stalled ribosome"/>
    <property type="evidence" value="ECO:0007669"/>
    <property type="project" value="UniProtKB-UniRule"/>
</dbReference>
<dbReference type="CDD" id="cd00462">
    <property type="entry name" value="PTH"/>
    <property type="match status" value="1"/>
</dbReference>
<dbReference type="FunFam" id="3.40.50.1470:FF:000001">
    <property type="entry name" value="Peptidyl-tRNA hydrolase"/>
    <property type="match status" value="1"/>
</dbReference>
<dbReference type="Gene3D" id="3.40.50.1470">
    <property type="entry name" value="Peptidyl-tRNA hydrolase"/>
    <property type="match status" value="1"/>
</dbReference>
<dbReference type="HAMAP" id="MF_00083">
    <property type="entry name" value="Pept_tRNA_hydro_bact"/>
    <property type="match status" value="1"/>
</dbReference>
<dbReference type="InterPro" id="IPR001328">
    <property type="entry name" value="Pept_tRNA_hydro"/>
</dbReference>
<dbReference type="InterPro" id="IPR018171">
    <property type="entry name" value="Pept_tRNA_hydro_CS"/>
</dbReference>
<dbReference type="InterPro" id="IPR036416">
    <property type="entry name" value="Pept_tRNA_hydro_sf"/>
</dbReference>
<dbReference type="NCBIfam" id="TIGR00447">
    <property type="entry name" value="pth"/>
    <property type="match status" value="1"/>
</dbReference>
<dbReference type="PANTHER" id="PTHR17224">
    <property type="entry name" value="PEPTIDYL-TRNA HYDROLASE"/>
    <property type="match status" value="1"/>
</dbReference>
<dbReference type="PANTHER" id="PTHR17224:SF1">
    <property type="entry name" value="PEPTIDYL-TRNA HYDROLASE"/>
    <property type="match status" value="1"/>
</dbReference>
<dbReference type="Pfam" id="PF01195">
    <property type="entry name" value="Pept_tRNA_hydro"/>
    <property type="match status" value="1"/>
</dbReference>
<dbReference type="SUPFAM" id="SSF53178">
    <property type="entry name" value="Peptidyl-tRNA hydrolase-like"/>
    <property type="match status" value="1"/>
</dbReference>
<dbReference type="PROSITE" id="PS01195">
    <property type="entry name" value="PEPT_TRNA_HYDROL_1"/>
    <property type="match status" value="1"/>
</dbReference>
<dbReference type="PROSITE" id="PS01196">
    <property type="entry name" value="PEPT_TRNA_HYDROL_2"/>
    <property type="match status" value="1"/>
</dbReference>
<keyword id="KW-0963">Cytoplasm</keyword>
<keyword id="KW-0378">Hydrolase</keyword>
<keyword id="KW-0694">RNA-binding</keyword>
<keyword id="KW-0820">tRNA-binding</keyword>
<name>PTH_RHOPA</name>
<reference key="1">
    <citation type="journal article" date="2004" name="Nat. Biotechnol.">
        <title>Complete genome sequence of the metabolically versatile photosynthetic bacterium Rhodopseudomonas palustris.</title>
        <authorList>
            <person name="Larimer F.W."/>
            <person name="Chain P."/>
            <person name="Hauser L."/>
            <person name="Lamerdin J.E."/>
            <person name="Malfatti S."/>
            <person name="Do L."/>
            <person name="Land M.L."/>
            <person name="Pelletier D.A."/>
            <person name="Beatty J.T."/>
            <person name="Lang A.S."/>
            <person name="Tabita F.R."/>
            <person name="Gibson J.L."/>
            <person name="Hanson T.E."/>
            <person name="Bobst C."/>
            <person name="Torres y Torres J.L."/>
            <person name="Peres C."/>
            <person name="Harrison F.H."/>
            <person name="Gibson J."/>
            <person name="Harwood C.S."/>
        </authorList>
    </citation>
    <scope>NUCLEOTIDE SEQUENCE [LARGE SCALE GENOMIC DNA]</scope>
    <source>
        <strain>ATCC BAA-98 / CGA009</strain>
    </source>
</reference>
<proteinExistence type="inferred from homology"/>
<protein>
    <recommendedName>
        <fullName evidence="1">Peptidyl-tRNA hydrolase</fullName>
        <shortName evidence="1">Pth</shortName>
        <ecNumber evidence="1">3.1.1.29</ecNumber>
    </recommendedName>
</protein>
<evidence type="ECO:0000255" key="1">
    <source>
        <dbReference type="HAMAP-Rule" id="MF_00083"/>
    </source>
</evidence>
<feature type="chain" id="PRO_0000187803" description="Peptidyl-tRNA hydrolase">
    <location>
        <begin position="1"/>
        <end position="206"/>
    </location>
</feature>
<feature type="active site" description="Proton acceptor" evidence="1">
    <location>
        <position position="19"/>
    </location>
</feature>
<feature type="binding site" evidence="1">
    <location>
        <position position="14"/>
    </location>
    <ligand>
        <name>tRNA</name>
        <dbReference type="ChEBI" id="CHEBI:17843"/>
    </ligand>
</feature>
<feature type="binding site" evidence="1">
    <location>
        <position position="64"/>
    </location>
    <ligand>
        <name>tRNA</name>
        <dbReference type="ChEBI" id="CHEBI:17843"/>
    </ligand>
</feature>
<feature type="binding site" evidence="1">
    <location>
        <position position="66"/>
    </location>
    <ligand>
        <name>tRNA</name>
        <dbReference type="ChEBI" id="CHEBI:17843"/>
    </ligand>
</feature>
<feature type="binding site" evidence="1">
    <location>
        <position position="112"/>
    </location>
    <ligand>
        <name>tRNA</name>
        <dbReference type="ChEBI" id="CHEBI:17843"/>
    </ligand>
</feature>
<feature type="site" description="Discriminates between blocked and unblocked aminoacyl-tRNA" evidence="1">
    <location>
        <position position="9"/>
    </location>
</feature>
<feature type="site" description="Stabilizes the basic form of H active site to accept a proton" evidence="1">
    <location>
        <position position="91"/>
    </location>
</feature>
<comment type="function">
    <text evidence="1">Hydrolyzes ribosome-free peptidyl-tRNAs (with 1 or more amino acids incorporated), which drop off the ribosome during protein synthesis, or as a result of ribosome stalling.</text>
</comment>
<comment type="function">
    <text evidence="1">Catalyzes the release of premature peptidyl moieties from peptidyl-tRNA molecules trapped in stalled 50S ribosomal subunits, and thus maintains levels of free tRNAs and 50S ribosomes.</text>
</comment>
<comment type="catalytic activity">
    <reaction evidence="1">
        <text>an N-acyl-L-alpha-aminoacyl-tRNA + H2O = an N-acyl-L-amino acid + a tRNA + H(+)</text>
        <dbReference type="Rhea" id="RHEA:54448"/>
        <dbReference type="Rhea" id="RHEA-COMP:10123"/>
        <dbReference type="Rhea" id="RHEA-COMP:13883"/>
        <dbReference type="ChEBI" id="CHEBI:15377"/>
        <dbReference type="ChEBI" id="CHEBI:15378"/>
        <dbReference type="ChEBI" id="CHEBI:59874"/>
        <dbReference type="ChEBI" id="CHEBI:78442"/>
        <dbReference type="ChEBI" id="CHEBI:138191"/>
        <dbReference type="EC" id="3.1.1.29"/>
    </reaction>
</comment>
<comment type="subunit">
    <text evidence="1">Monomer.</text>
</comment>
<comment type="subcellular location">
    <subcellularLocation>
        <location evidence="1">Cytoplasm</location>
    </subcellularLocation>
</comment>
<comment type="similarity">
    <text evidence="1">Belongs to the PTH family.</text>
</comment>
<gene>
    <name evidence="1" type="primary">pth</name>
    <name type="ordered locus">RPA4355</name>
</gene>